<organism>
    <name type="scientific">Thermotoga maritima (strain ATCC 43589 / DSM 3109 / JCM 10099 / NBRC 100826 / MSB8)</name>
    <dbReference type="NCBI Taxonomy" id="243274"/>
    <lineage>
        <taxon>Bacteria</taxon>
        <taxon>Thermotogati</taxon>
        <taxon>Thermotogota</taxon>
        <taxon>Thermotogae</taxon>
        <taxon>Thermotogales</taxon>
        <taxon>Thermotogaceae</taxon>
        <taxon>Thermotoga</taxon>
    </lineage>
</organism>
<comment type="similarity">
    <text evidence="1">Belongs to the UPF0150 family.</text>
</comment>
<keyword id="KW-1185">Reference proteome</keyword>
<name>Y1311_THEMA</name>
<accession>Q9X137</accession>
<proteinExistence type="inferred from homology"/>
<feature type="chain" id="PRO_0000157938" description="UPF0150 protein TM_1311">
    <location>
        <begin position="1"/>
        <end position="70"/>
    </location>
</feature>
<dbReference type="EMBL" id="AE000512">
    <property type="protein sequence ID" value="AAD36385.1"/>
    <property type="molecule type" value="Genomic_DNA"/>
</dbReference>
<dbReference type="PIR" id="A72271">
    <property type="entry name" value="A72271"/>
</dbReference>
<dbReference type="RefSeq" id="NP_229115.1">
    <property type="nucleotide sequence ID" value="NC_000853.1"/>
</dbReference>
<dbReference type="RefSeq" id="WP_004079908.1">
    <property type="nucleotide sequence ID" value="NZ_CP011107.1"/>
</dbReference>
<dbReference type="SMR" id="Q9X137"/>
<dbReference type="STRING" id="243274.TM_1311"/>
<dbReference type="PaxDb" id="243274-THEMA_07790"/>
<dbReference type="EnsemblBacteria" id="AAD36385">
    <property type="protein sequence ID" value="AAD36385"/>
    <property type="gene ID" value="TM_1311"/>
</dbReference>
<dbReference type="KEGG" id="tma:TM1311"/>
<dbReference type="KEGG" id="tmi:THEMA_07790"/>
<dbReference type="KEGG" id="tmm:Tmari_1317"/>
<dbReference type="KEGG" id="tmw:THMA_1335"/>
<dbReference type="eggNOG" id="COG1598">
    <property type="taxonomic scope" value="Bacteria"/>
</dbReference>
<dbReference type="InParanoid" id="Q9X137"/>
<dbReference type="OrthoDB" id="9805307at2"/>
<dbReference type="Proteomes" id="UP000008183">
    <property type="component" value="Chromosome"/>
</dbReference>
<dbReference type="Gene3D" id="3.30.160.250">
    <property type="match status" value="1"/>
</dbReference>
<dbReference type="InterPro" id="IPR035069">
    <property type="entry name" value="TTHA1013/TTHA0281-like"/>
</dbReference>
<dbReference type="SUPFAM" id="SSF143100">
    <property type="entry name" value="TTHA1013/TTHA0281-like"/>
    <property type="match status" value="1"/>
</dbReference>
<gene>
    <name type="ordered locus">TM_1311</name>
</gene>
<reference key="1">
    <citation type="journal article" date="1999" name="Nature">
        <title>Evidence for lateral gene transfer between Archaea and Bacteria from genome sequence of Thermotoga maritima.</title>
        <authorList>
            <person name="Nelson K.E."/>
            <person name="Clayton R.A."/>
            <person name="Gill S.R."/>
            <person name="Gwinn M.L."/>
            <person name="Dodson R.J."/>
            <person name="Haft D.H."/>
            <person name="Hickey E.K."/>
            <person name="Peterson J.D."/>
            <person name="Nelson W.C."/>
            <person name="Ketchum K.A."/>
            <person name="McDonald L.A."/>
            <person name="Utterback T.R."/>
            <person name="Malek J.A."/>
            <person name="Linher K.D."/>
            <person name="Garrett M.M."/>
            <person name="Stewart A.M."/>
            <person name="Cotton M.D."/>
            <person name="Pratt M.S."/>
            <person name="Phillips C.A."/>
            <person name="Richardson D.L."/>
            <person name="Heidelberg J.F."/>
            <person name="Sutton G.G."/>
            <person name="Fleischmann R.D."/>
            <person name="Eisen J.A."/>
            <person name="White O."/>
            <person name="Salzberg S.L."/>
            <person name="Smith H.O."/>
            <person name="Venter J.C."/>
            <person name="Fraser C.M."/>
        </authorList>
    </citation>
    <scope>NUCLEOTIDE SEQUENCE [LARGE SCALE GENOMIC DNA]</scope>
    <source>
        <strain>ATCC 43589 / DSM 3109 / JCM 10099 / NBRC 100826 / MSB8</strain>
    </source>
</reference>
<sequence>METQKEIVFIAVESEDGGYIEKTERYSIFTQGDTWEELLEMIKDAVKCHFDEGAPKYVHARFVKDVTIAV</sequence>
<protein>
    <recommendedName>
        <fullName>UPF0150 protein TM_1311</fullName>
    </recommendedName>
</protein>
<evidence type="ECO:0000305" key="1"/>